<gene>
    <name type="primary">cpsB</name>
    <name type="synonym">cpsIaB</name>
    <name type="ordered locus">SAG1174</name>
</gene>
<name>CPSB_STRA5</name>
<accession>P0A364</accession>
<accession>Q9S0S9</accession>
<reference key="1">
    <citation type="submission" date="2001-02" db="EMBL/GenBank/DDBJ databases">
        <title>Streptococcus agalactiae type V polysaccharide synthesis operon complete sequence.</title>
        <authorList>
            <person name="McKinnon K."/>
            <person name="Chaffin D.O."/>
            <person name="Rubens C.E."/>
        </authorList>
    </citation>
    <scope>NUCLEOTIDE SEQUENCE [GENOMIC DNA]</scope>
    <source>
        <strain>CNCTC 1/82 / Serotype V</strain>
    </source>
</reference>
<reference key="2">
    <citation type="journal article" date="2002" name="Proc. Natl. Acad. Sci. U.S.A.">
        <title>Complete genome sequence and comparative genomic analysis of an emerging human pathogen, serotype V Streptococcus agalactiae.</title>
        <authorList>
            <person name="Tettelin H."/>
            <person name="Masignani V."/>
            <person name="Cieslewicz M.J."/>
            <person name="Eisen J.A."/>
            <person name="Peterson S.N."/>
            <person name="Wessels M.R."/>
            <person name="Paulsen I.T."/>
            <person name="Nelson K.E."/>
            <person name="Margarit I."/>
            <person name="Read T.D."/>
            <person name="Madoff L.C."/>
            <person name="Wolf A.M."/>
            <person name="Beanan M.J."/>
            <person name="Brinkac L.M."/>
            <person name="Daugherty S.C."/>
            <person name="DeBoy R.T."/>
            <person name="Durkin A.S."/>
            <person name="Kolonay J.F."/>
            <person name="Madupu R."/>
            <person name="Lewis M.R."/>
            <person name="Radune D."/>
            <person name="Fedorova N.B."/>
            <person name="Scanlan D."/>
            <person name="Khouri H.M."/>
            <person name="Mulligan S."/>
            <person name="Carty H.A."/>
            <person name="Cline R.T."/>
            <person name="Van Aken S.E."/>
            <person name="Gill J."/>
            <person name="Scarselli M."/>
            <person name="Mora M."/>
            <person name="Iacobini E.T."/>
            <person name="Brettoni C."/>
            <person name="Galli G."/>
            <person name="Mariani M."/>
            <person name="Vegni F."/>
            <person name="Maione D."/>
            <person name="Rinaudo D."/>
            <person name="Rappuoli R."/>
            <person name="Telford J.L."/>
            <person name="Kasper D.L."/>
            <person name="Grandi G."/>
            <person name="Fraser C.M."/>
        </authorList>
    </citation>
    <scope>NUCLEOTIDE SEQUENCE [LARGE SCALE GENOMIC DNA]</scope>
    <source>
        <strain>ATCC BAA-611 / 2603 V/R</strain>
    </source>
</reference>
<keyword id="KW-0972">Capsule biogenesis/degradation</keyword>
<keyword id="KW-0270">Exopolysaccharide synthesis</keyword>
<keyword id="KW-0378">Hydrolase</keyword>
<keyword id="KW-0464">Manganese</keyword>
<keyword id="KW-0904">Protein phosphatase</keyword>
<keyword id="KW-1185">Reference proteome</keyword>
<comment type="function">
    <text evidence="1">Dephosphorylates CpsD. Involved in the regulation of capsular polysaccharide biosynthesis (By similarity).</text>
</comment>
<comment type="catalytic activity">
    <reaction>
        <text>O-phospho-L-tyrosyl-[protein] + H2O = L-tyrosyl-[protein] + phosphate</text>
        <dbReference type="Rhea" id="RHEA:10684"/>
        <dbReference type="Rhea" id="RHEA-COMP:10136"/>
        <dbReference type="Rhea" id="RHEA-COMP:20101"/>
        <dbReference type="ChEBI" id="CHEBI:15377"/>
        <dbReference type="ChEBI" id="CHEBI:43474"/>
        <dbReference type="ChEBI" id="CHEBI:46858"/>
        <dbReference type="ChEBI" id="CHEBI:61978"/>
        <dbReference type="EC" id="3.1.3.48"/>
    </reaction>
</comment>
<comment type="cofactor">
    <cofactor evidence="1">
        <name>Mn(2+)</name>
        <dbReference type="ChEBI" id="CHEBI:29035"/>
    </cofactor>
</comment>
<comment type="pathway">
    <text>Capsule biogenesis; capsule polysaccharide biosynthesis.</text>
</comment>
<comment type="similarity">
    <text evidence="2">Belongs to the metallo-dependent hydrolases superfamily. CpsB/CapC family.</text>
</comment>
<evidence type="ECO:0000250" key="1"/>
<evidence type="ECO:0000305" key="2"/>
<proteinExistence type="inferred from homology"/>
<protein>
    <recommendedName>
        <fullName>Tyrosine-protein phosphatase CpsB</fullName>
        <ecNumber>3.1.3.48</ecNumber>
    </recommendedName>
</protein>
<feature type="chain" id="PRO_0000057890" description="Tyrosine-protein phosphatase CpsB">
    <location>
        <begin position="1"/>
        <end position="243"/>
    </location>
</feature>
<dbReference type="EC" id="3.1.3.48"/>
<dbReference type="EMBL" id="AF349539">
    <property type="protein sequence ID" value="AAK29648.1"/>
    <property type="molecule type" value="Genomic_DNA"/>
</dbReference>
<dbReference type="EMBL" id="AE009948">
    <property type="protein sequence ID" value="AAN00056.1"/>
    <property type="molecule type" value="Genomic_DNA"/>
</dbReference>
<dbReference type="RefSeq" id="NP_688183.1">
    <property type="nucleotide sequence ID" value="NC_004116.1"/>
</dbReference>
<dbReference type="SMR" id="P0A364"/>
<dbReference type="STRING" id="208435.SAG1174"/>
<dbReference type="DNASU" id="1013981"/>
<dbReference type="KEGG" id="sag:SAG1174"/>
<dbReference type="PATRIC" id="fig|208435.3.peg.1180"/>
<dbReference type="HOGENOM" id="CLU_085966_1_0_9"/>
<dbReference type="OrthoDB" id="9788539at2"/>
<dbReference type="UniPathway" id="UPA00934"/>
<dbReference type="Proteomes" id="UP000000821">
    <property type="component" value="Chromosome"/>
</dbReference>
<dbReference type="GO" id="GO:0030145">
    <property type="term" value="F:manganese ion binding"/>
    <property type="evidence" value="ECO:0007669"/>
    <property type="project" value="InterPro"/>
</dbReference>
<dbReference type="GO" id="GO:0004725">
    <property type="term" value="F:protein tyrosine phosphatase activity"/>
    <property type="evidence" value="ECO:0007669"/>
    <property type="project" value="UniProtKB-EC"/>
</dbReference>
<dbReference type="GO" id="GO:0045227">
    <property type="term" value="P:capsule polysaccharide biosynthetic process"/>
    <property type="evidence" value="ECO:0007669"/>
    <property type="project" value="UniProtKB-UniPathway"/>
</dbReference>
<dbReference type="Gene3D" id="3.20.20.140">
    <property type="entry name" value="Metal-dependent hydrolases"/>
    <property type="match status" value="1"/>
</dbReference>
<dbReference type="InterPro" id="IPR048208">
    <property type="entry name" value="Caps_polysacc_synth_CpsB"/>
</dbReference>
<dbReference type="InterPro" id="IPR016667">
    <property type="entry name" value="Caps_polysacc_synth_CpsB/CapC"/>
</dbReference>
<dbReference type="InterPro" id="IPR032466">
    <property type="entry name" value="Metal_Hydrolase"/>
</dbReference>
<dbReference type="NCBIfam" id="NF041488">
    <property type="entry name" value="caps_synth_Cps4B"/>
    <property type="match status" value="1"/>
</dbReference>
<dbReference type="PANTHER" id="PTHR39181">
    <property type="entry name" value="TYROSINE-PROTEIN PHOSPHATASE YWQE"/>
    <property type="match status" value="1"/>
</dbReference>
<dbReference type="PANTHER" id="PTHR39181:SF1">
    <property type="entry name" value="TYROSINE-PROTEIN PHOSPHATASE YWQE"/>
    <property type="match status" value="1"/>
</dbReference>
<dbReference type="Pfam" id="PF19567">
    <property type="entry name" value="CpsB_CapC"/>
    <property type="match status" value="1"/>
</dbReference>
<dbReference type="PIRSF" id="PIRSF016557">
    <property type="entry name" value="Caps_synth_CpsB"/>
    <property type="match status" value="1"/>
</dbReference>
<dbReference type="SUPFAM" id="SSF51556">
    <property type="entry name" value="Metallo-dependent hydrolases"/>
    <property type="match status" value="1"/>
</dbReference>
<sequence length="243" mass="28600">MIDIHSHIVFDVDDGPKTLEESLSLIEESYRQGVRIIVSTSHRRKGMFETPEDIIFKNFSIVKHEAEKRFEHLQILYGGELYYTSDMLEKLKLKQIPTLNNTKFALIEFSMQTSWKDIHTALSNVLMLGITPVVAHIERYNALENQKERVKEIINMGCYTQINSSHILKQKLFNDKHKRFKKRARYFLEENLVHFVASDMHNLDVRPPFLAEAYKIICRDFGKERANQLFIENAQSILKNHYI</sequence>
<organism>
    <name type="scientific">Streptococcus agalactiae serotype V (strain ATCC BAA-611 / 2603 V/R)</name>
    <dbReference type="NCBI Taxonomy" id="208435"/>
    <lineage>
        <taxon>Bacteria</taxon>
        <taxon>Bacillati</taxon>
        <taxon>Bacillota</taxon>
        <taxon>Bacilli</taxon>
        <taxon>Lactobacillales</taxon>
        <taxon>Streptococcaceae</taxon>
        <taxon>Streptococcus</taxon>
    </lineage>
</organism>